<evidence type="ECO:0000255" key="1"/>
<evidence type="ECO:0000305" key="2"/>
<dbReference type="EMBL" id="M12868">
    <property type="protein sequence ID" value="AAA23981.1"/>
    <property type="status" value="ALT_FRAME"/>
    <property type="molecule type" value="Genomic_DNA"/>
</dbReference>
<dbReference type="EMBL" id="X69197">
    <property type="protein sequence ID" value="CAA48941.1"/>
    <property type="molecule type" value="Genomic_DNA"/>
</dbReference>
<dbReference type="PIR" id="S42624">
    <property type="entry name" value="HMECA1"/>
</dbReference>
<dbReference type="RefSeq" id="WP_000731739.1">
    <property type="nucleotide sequence ID" value="NZ_WNUB01000053.1"/>
</dbReference>
<dbReference type="SMR" id="P08180"/>
<dbReference type="GO" id="GO:0009289">
    <property type="term" value="C:pilus"/>
    <property type="evidence" value="ECO:0007669"/>
    <property type="project" value="UniProtKB-SubCell"/>
</dbReference>
<dbReference type="Gene3D" id="2.60.40.1570">
    <property type="entry name" value="Dr adhesin"/>
    <property type="match status" value="1"/>
</dbReference>
<dbReference type="InterPro" id="IPR006713">
    <property type="entry name" value="Adhesin_Dr"/>
</dbReference>
<dbReference type="InterPro" id="IPR021020">
    <property type="entry name" value="Adhesin_Dr_signal_peptide"/>
</dbReference>
<dbReference type="InterPro" id="IPR008966">
    <property type="entry name" value="Adhesion_dom_sf"/>
</dbReference>
<dbReference type="InterPro" id="IPR037028">
    <property type="entry name" value="Dr_adhesin_sf"/>
</dbReference>
<dbReference type="Pfam" id="PF04619">
    <property type="entry name" value="Adhesin_Dr"/>
    <property type="match status" value="1"/>
</dbReference>
<dbReference type="Pfam" id="PF12393">
    <property type="entry name" value="Dr_adhesin"/>
    <property type="match status" value="1"/>
</dbReference>
<dbReference type="SUPFAM" id="SSF49401">
    <property type="entry name" value="Bacterial adhesins"/>
    <property type="match status" value="1"/>
</dbReference>
<comment type="function">
    <text>Hemagglutinins of uropathogenic E.coli mediate adherence to the upper urinary tract. These adhesins bind to the Dr blood group antigen and also agglutinate human erythrocytes in the presence of D-mannose (mannose-resistant hemagglutination (MRHA)).</text>
</comment>
<comment type="subcellular location">
    <subcellularLocation>
        <location>Fimbrium</location>
    </subcellularLocation>
</comment>
<comment type="similarity">
    <text evidence="2">Belongs to the Dr-adhesin family.</text>
</comment>
<comment type="sequence caution" evidence="2">
    <conflict type="frameshift">
        <sequence resource="EMBL-CDS" id="AAA23981"/>
    </conflict>
</comment>
<name>AFAE1_ECOLX</name>
<proteinExistence type="inferred from homology"/>
<reference key="1">
    <citation type="journal article" date="1985" name="J. Bacteriol.">
        <title>Genetic organization of the afimbrial adhesin operon and nucleotide sequence from a uropathogenic Escherichia coli gene encoding an afimbrial adhesin.</title>
        <authorList>
            <person name="Labigne-Roussel A."/>
            <person name="Schmidt M.A."/>
            <person name="Walz W."/>
            <person name="Falkow S."/>
        </authorList>
    </citation>
    <scope>NUCLEOTIDE SEQUENCE [GENOMIC DNA] OF 1-152</scope>
    <source>
        <strain>KS52</strain>
    </source>
</reference>
<reference key="2">
    <citation type="journal article" date="1993" name="Infect. Immun.">
        <title>Characterization of plasmid-borne afa-3 gene clusters encoding afimbrial adhesins expressed by Escherichia coli strains associated with intestinal or urinary tract infections.</title>
        <authorList>
            <person name="le Bouguenec C.L."/>
            <person name="Garcia M.-I."/>
            <person name="Ouin V."/>
            <person name="Desperrier J.-M."/>
            <person name="Gounon P."/>
            <person name="Labigne A."/>
        </authorList>
    </citation>
    <scope>NUCLEOTIDE SEQUENCE [GENOMIC DNA]</scope>
    <source>
        <strain>KS52</strain>
    </source>
</reference>
<sequence>MKKLAIIGATSVMMMTGTAQANFTSSGTNGKVDLTITEECRVTVESKSESFLRSGLVANRHITNLGIQSTGCGTGQRVALKLGAGSYDDTNGAHMTHENGTDKLLVSMGSATGDGTQDGGVYYINRDGNWNGQMVFIVRNDQQHLPTGKYTLNLEGGFWTK</sequence>
<accession>P08180</accession>
<accession>Q47034</accession>
<keyword id="KW-0281">Fimbrium</keyword>
<keyword id="KW-0732">Signal</keyword>
<feature type="signal peptide" evidence="1">
    <location>
        <begin position="1"/>
        <end position="21"/>
    </location>
</feature>
<feature type="chain" id="PRO_0000000872" description="Afimbrial adhesin AFA-I">
    <location>
        <begin position="22"/>
        <end position="161"/>
    </location>
</feature>
<gene>
    <name type="primary">afaE1</name>
    <name type="synonym">afaE</name>
    <name type="synonym">afaE-1</name>
</gene>
<organism>
    <name type="scientific">Escherichia coli</name>
    <dbReference type="NCBI Taxonomy" id="562"/>
    <lineage>
        <taxon>Bacteria</taxon>
        <taxon>Pseudomonadati</taxon>
        <taxon>Pseudomonadota</taxon>
        <taxon>Gammaproteobacteria</taxon>
        <taxon>Enterobacterales</taxon>
        <taxon>Enterobacteriaceae</taxon>
        <taxon>Escherichia</taxon>
    </lineage>
</organism>
<protein>
    <recommendedName>
        <fullName>Afimbrial adhesin AFA-I</fullName>
    </recommendedName>
    <alternativeName>
        <fullName>Dr hemagglutinin AFA-I</fullName>
    </alternativeName>
</protein>